<evidence type="ECO:0000250" key="1"/>
<evidence type="ECO:0000255" key="2">
    <source>
        <dbReference type="HAMAP-Rule" id="MF_00162"/>
    </source>
</evidence>
<dbReference type="EC" id="6.3.2.3" evidence="2"/>
<dbReference type="EMBL" id="AE008923">
    <property type="protein sequence ID" value="AAM37948.1"/>
    <property type="molecule type" value="Genomic_DNA"/>
</dbReference>
<dbReference type="RefSeq" id="WP_011052038.1">
    <property type="nucleotide sequence ID" value="NC_003919.1"/>
</dbReference>
<dbReference type="SMR" id="Q8PHZ5"/>
<dbReference type="GeneID" id="66912172"/>
<dbReference type="KEGG" id="xac:XAC3103"/>
<dbReference type="eggNOG" id="COG0189">
    <property type="taxonomic scope" value="Bacteria"/>
</dbReference>
<dbReference type="HOGENOM" id="CLU_068239_0_0_6"/>
<dbReference type="UniPathway" id="UPA00142">
    <property type="reaction ID" value="UER00210"/>
</dbReference>
<dbReference type="Proteomes" id="UP000000576">
    <property type="component" value="Chromosome"/>
</dbReference>
<dbReference type="GO" id="GO:0005737">
    <property type="term" value="C:cytoplasm"/>
    <property type="evidence" value="ECO:0007669"/>
    <property type="project" value="TreeGrafter"/>
</dbReference>
<dbReference type="GO" id="GO:0005524">
    <property type="term" value="F:ATP binding"/>
    <property type="evidence" value="ECO:0007669"/>
    <property type="project" value="UniProtKB-UniRule"/>
</dbReference>
<dbReference type="GO" id="GO:0004363">
    <property type="term" value="F:glutathione synthase activity"/>
    <property type="evidence" value="ECO:0007669"/>
    <property type="project" value="UniProtKB-UniRule"/>
</dbReference>
<dbReference type="GO" id="GO:0046872">
    <property type="term" value="F:metal ion binding"/>
    <property type="evidence" value="ECO:0007669"/>
    <property type="project" value="UniProtKB-KW"/>
</dbReference>
<dbReference type="FunFam" id="3.30.1490.20:FF:000009">
    <property type="entry name" value="Glutathione synthetase"/>
    <property type="match status" value="1"/>
</dbReference>
<dbReference type="FunFam" id="3.30.470.20:FF:000010">
    <property type="entry name" value="Glutathione synthetase"/>
    <property type="match status" value="1"/>
</dbReference>
<dbReference type="FunFam" id="3.40.50.20:FF:000009">
    <property type="entry name" value="Glutathione synthetase"/>
    <property type="match status" value="1"/>
</dbReference>
<dbReference type="Gene3D" id="3.40.50.20">
    <property type="match status" value="1"/>
</dbReference>
<dbReference type="Gene3D" id="3.30.1490.20">
    <property type="entry name" value="ATP-grasp fold, A domain"/>
    <property type="match status" value="1"/>
</dbReference>
<dbReference type="Gene3D" id="3.30.470.20">
    <property type="entry name" value="ATP-grasp fold, B domain"/>
    <property type="match status" value="1"/>
</dbReference>
<dbReference type="HAMAP" id="MF_00162">
    <property type="entry name" value="GSH_S"/>
    <property type="match status" value="1"/>
</dbReference>
<dbReference type="InterPro" id="IPR011761">
    <property type="entry name" value="ATP-grasp"/>
</dbReference>
<dbReference type="InterPro" id="IPR013815">
    <property type="entry name" value="ATP_grasp_subdomain_1"/>
</dbReference>
<dbReference type="InterPro" id="IPR006284">
    <property type="entry name" value="Glut_synth_pro"/>
</dbReference>
<dbReference type="InterPro" id="IPR004218">
    <property type="entry name" value="GSHS_ATP-bd"/>
</dbReference>
<dbReference type="InterPro" id="IPR004215">
    <property type="entry name" value="GSHS_N"/>
</dbReference>
<dbReference type="InterPro" id="IPR016185">
    <property type="entry name" value="PreATP-grasp_dom_sf"/>
</dbReference>
<dbReference type="NCBIfam" id="TIGR01380">
    <property type="entry name" value="glut_syn"/>
    <property type="match status" value="1"/>
</dbReference>
<dbReference type="NCBIfam" id="NF003573">
    <property type="entry name" value="PRK05246.1"/>
    <property type="match status" value="1"/>
</dbReference>
<dbReference type="PANTHER" id="PTHR21621:SF4">
    <property type="entry name" value="GLUTATHIONE SYNTHETASE"/>
    <property type="match status" value="1"/>
</dbReference>
<dbReference type="PANTHER" id="PTHR21621">
    <property type="entry name" value="RIBOSOMAL PROTEIN S6 MODIFICATION PROTEIN"/>
    <property type="match status" value="1"/>
</dbReference>
<dbReference type="Pfam" id="PF02955">
    <property type="entry name" value="GSH-S_ATP"/>
    <property type="match status" value="1"/>
</dbReference>
<dbReference type="Pfam" id="PF02951">
    <property type="entry name" value="GSH-S_N"/>
    <property type="match status" value="1"/>
</dbReference>
<dbReference type="SUPFAM" id="SSF56059">
    <property type="entry name" value="Glutathione synthetase ATP-binding domain-like"/>
    <property type="match status" value="1"/>
</dbReference>
<dbReference type="SUPFAM" id="SSF52440">
    <property type="entry name" value="PreATP-grasp domain"/>
    <property type="match status" value="1"/>
</dbReference>
<dbReference type="PROSITE" id="PS50975">
    <property type="entry name" value="ATP_GRASP"/>
    <property type="match status" value="1"/>
</dbReference>
<name>GSHB_XANAC</name>
<gene>
    <name evidence="2" type="primary">gshB</name>
    <name type="ordered locus">XAC3103</name>
</gene>
<reference key="1">
    <citation type="journal article" date="2002" name="Nature">
        <title>Comparison of the genomes of two Xanthomonas pathogens with differing host specificities.</title>
        <authorList>
            <person name="da Silva A.C.R."/>
            <person name="Ferro J.A."/>
            <person name="Reinach F.C."/>
            <person name="Farah C.S."/>
            <person name="Furlan L.R."/>
            <person name="Quaggio R.B."/>
            <person name="Monteiro-Vitorello C.B."/>
            <person name="Van Sluys M.A."/>
            <person name="Almeida N.F. Jr."/>
            <person name="Alves L.M.C."/>
            <person name="do Amaral A.M."/>
            <person name="Bertolini M.C."/>
            <person name="Camargo L.E.A."/>
            <person name="Camarotte G."/>
            <person name="Cannavan F."/>
            <person name="Cardozo J."/>
            <person name="Chambergo F."/>
            <person name="Ciapina L.P."/>
            <person name="Cicarelli R.M.B."/>
            <person name="Coutinho L.L."/>
            <person name="Cursino-Santos J.R."/>
            <person name="El-Dorry H."/>
            <person name="Faria J.B."/>
            <person name="Ferreira A.J.S."/>
            <person name="Ferreira R.C.C."/>
            <person name="Ferro M.I.T."/>
            <person name="Formighieri E.F."/>
            <person name="Franco M.C."/>
            <person name="Greggio C.C."/>
            <person name="Gruber A."/>
            <person name="Katsuyama A.M."/>
            <person name="Kishi L.T."/>
            <person name="Leite R.P."/>
            <person name="Lemos E.G.M."/>
            <person name="Lemos M.V.F."/>
            <person name="Locali E.C."/>
            <person name="Machado M.A."/>
            <person name="Madeira A.M.B.N."/>
            <person name="Martinez-Rossi N.M."/>
            <person name="Martins E.C."/>
            <person name="Meidanis J."/>
            <person name="Menck C.F.M."/>
            <person name="Miyaki C.Y."/>
            <person name="Moon D.H."/>
            <person name="Moreira L.M."/>
            <person name="Novo M.T.M."/>
            <person name="Okura V.K."/>
            <person name="Oliveira M.C."/>
            <person name="Oliveira V.R."/>
            <person name="Pereira H.A."/>
            <person name="Rossi A."/>
            <person name="Sena J.A.D."/>
            <person name="Silva C."/>
            <person name="de Souza R.F."/>
            <person name="Spinola L.A.F."/>
            <person name="Takita M.A."/>
            <person name="Tamura R.E."/>
            <person name="Teixeira E.C."/>
            <person name="Tezza R.I.D."/>
            <person name="Trindade dos Santos M."/>
            <person name="Truffi D."/>
            <person name="Tsai S.M."/>
            <person name="White F.F."/>
            <person name="Setubal J.C."/>
            <person name="Kitajima J.P."/>
        </authorList>
    </citation>
    <scope>NUCLEOTIDE SEQUENCE [LARGE SCALE GENOMIC DNA]</scope>
    <source>
        <strain>306</strain>
    </source>
</reference>
<protein>
    <recommendedName>
        <fullName evidence="2">Glutathione synthetase</fullName>
        <ecNumber evidence="2">6.3.2.3</ecNumber>
    </recommendedName>
    <alternativeName>
        <fullName evidence="2">GSH synthetase</fullName>
        <shortName evidence="2">GSH-S</shortName>
        <shortName evidence="2">GSHase</shortName>
    </alternativeName>
    <alternativeName>
        <fullName evidence="2">Glutathione synthase</fullName>
    </alternativeName>
</protein>
<sequence>MSLDVVVVMDPIASIKIAKDTTFAMLLEAQRRGHRLHYVRPGGLSLREGRAVAQVAPLSVREDKTSWFTLGEFAELAFGPGQVVLMRKDPPVDAEFVYDTQVLSVAQRAGAQIVNDPQGLRDYNEKLAALLFPQCCPPTLVSRDAAALKAFVLEHGQAVLKPLDGMGGRSIFRSGSGDPNLNVILETLTDGNRKLTLAQRFIPDITAGDKRILLVDGLPVDYCLARIPQGDEFRGNLAAGGRGEGRPLSERDRWIAAQVGPEMRRRGMRFVGLDVIGDYLTEVNVTSPTCVRELDAQFGLNIAGLLFDAIEAGAAQ</sequence>
<feature type="chain" id="PRO_0000197496" description="Glutathione synthetase">
    <location>
        <begin position="1"/>
        <end position="316"/>
    </location>
</feature>
<feature type="domain" description="ATP-grasp" evidence="2">
    <location>
        <begin position="124"/>
        <end position="311"/>
    </location>
</feature>
<feature type="binding site" evidence="2">
    <location>
        <begin position="151"/>
        <end position="208"/>
    </location>
    <ligand>
        <name>ATP</name>
        <dbReference type="ChEBI" id="CHEBI:30616"/>
    </ligand>
</feature>
<feature type="binding site" evidence="2">
    <location>
        <position position="282"/>
    </location>
    <ligand>
        <name>Mg(2+)</name>
        <dbReference type="ChEBI" id="CHEBI:18420"/>
    </ligand>
</feature>
<feature type="binding site" evidence="2">
    <location>
        <position position="284"/>
    </location>
    <ligand>
        <name>Mg(2+)</name>
        <dbReference type="ChEBI" id="CHEBI:18420"/>
    </ligand>
</feature>
<organism>
    <name type="scientific">Xanthomonas axonopodis pv. citri (strain 306)</name>
    <dbReference type="NCBI Taxonomy" id="190486"/>
    <lineage>
        <taxon>Bacteria</taxon>
        <taxon>Pseudomonadati</taxon>
        <taxon>Pseudomonadota</taxon>
        <taxon>Gammaproteobacteria</taxon>
        <taxon>Lysobacterales</taxon>
        <taxon>Lysobacteraceae</taxon>
        <taxon>Xanthomonas</taxon>
    </lineage>
</organism>
<proteinExistence type="inferred from homology"/>
<keyword id="KW-0067">ATP-binding</keyword>
<keyword id="KW-0317">Glutathione biosynthesis</keyword>
<keyword id="KW-0436">Ligase</keyword>
<keyword id="KW-0460">Magnesium</keyword>
<keyword id="KW-0464">Manganese</keyword>
<keyword id="KW-0479">Metal-binding</keyword>
<keyword id="KW-0547">Nucleotide-binding</keyword>
<accession>Q8PHZ5</accession>
<comment type="catalytic activity">
    <reaction evidence="2">
        <text>gamma-L-glutamyl-L-cysteine + glycine + ATP = glutathione + ADP + phosphate + H(+)</text>
        <dbReference type="Rhea" id="RHEA:13557"/>
        <dbReference type="ChEBI" id="CHEBI:15378"/>
        <dbReference type="ChEBI" id="CHEBI:30616"/>
        <dbReference type="ChEBI" id="CHEBI:43474"/>
        <dbReference type="ChEBI" id="CHEBI:57305"/>
        <dbReference type="ChEBI" id="CHEBI:57925"/>
        <dbReference type="ChEBI" id="CHEBI:58173"/>
        <dbReference type="ChEBI" id="CHEBI:456216"/>
        <dbReference type="EC" id="6.3.2.3"/>
    </reaction>
</comment>
<comment type="cofactor">
    <cofactor evidence="1">
        <name>Mg(2+)</name>
        <dbReference type="ChEBI" id="CHEBI:18420"/>
    </cofactor>
    <cofactor evidence="1">
        <name>Mn(2+)</name>
        <dbReference type="ChEBI" id="CHEBI:29035"/>
    </cofactor>
    <text evidence="1">Binds 1 Mg(2+) or Mn(2+) ion per subunit.</text>
</comment>
<comment type="pathway">
    <text evidence="2">Sulfur metabolism; glutathione biosynthesis; glutathione from L-cysteine and L-glutamate: step 2/2.</text>
</comment>
<comment type="similarity">
    <text evidence="2">Belongs to the prokaryotic GSH synthase family.</text>
</comment>